<accession>Q2FZF0</accession>
<accession>Q8KQR0</accession>
<proteinExistence type="evidence at protein level"/>
<reference key="1">
    <citation type="journal article" date="2002" name="Mol. Microbiol.">
        <title>Transferrin binding in Staphylococcus aureus: involvement of a cell wall-anchored protein.</title>
        <authorList>
            <person name="Taylor J.M."/>
            <person name="Heinrichs D.E."/>
        </authorList>
    </citation>
    <scope>NUCLEOTIDE SEQUENCE [GENOMIC DNA]</scope>
    <scope>IRON-REGULATED EXPRESSION</scope>
</reference>
<reference key="2">
    <citation type="book" date="2006" name="Gram positive pathogens, 2nd edition">
        <title>The Staphylococcus aureus NCTC 8325 genome.</title>
        <editorList>
            <person name="Fischetti V."/>
            <person name="Novick R."/>
            <person name="Ferretti J."/>
            <person name="Portnoy D."/>
            <person name="Rood J."/>
        </editorList>
        <authorList>
            <person name="Gillaspy A.F."/>
            <person name="Worrell V."/>
            <person name="Orvis J."/>
            <person name="Roe B.A."/>
            <person name="Dyer D.W."/>
            <person name="Iandolo J.J."/>
        </authorList>
    </citation>
    <scope>NUCLEOTIDE SEQUENCE [LARGE SCALE GENOMIC DNA]</scope>
    <source>
        <strain>NCTC 8325 / PS 47</strain>
    </source>
</reference>
<reference key="3">
    <citation type="journal article" date="2002" name="Infect. Immun.">
        <title>Conservation, surface exposure, and in vivo expression of the Frp family of iron-regulated cell wall proteins in Staphylococcus aureus.</title>
        <authorList>
            <person name="Morrissey J.A."/>
            <person name="Cockayne A."/>
            <person name="Hammacott J."/>
            <person name="Bishop K."/>
            <person name="Denman-Johnson A."/>
            <person name="Hill P.J."/>
            <person name="Williams P."/>
        </authorList>
    </citation>
    <scope>REGULATION BY FUR</scope>
    <scope>SUBCELLULAR LOCATION</scope>
</reference>
<reference key="4">
    <citation type="journal article" date="2002" name="Proc. Natl. Acad. Sci. U.S.A.">
        <title>An iron-regulated sortase anchors a class of surface protein during Staphylococcus aureus pathogenesis.</title>
        <authorList>
            <person name="Mazmanian S.K."/>
            <person name="Ton-That H."/>
            <person name="Su K."/>
            <person name="Schneewind O."/>
        </authorList>
    </citation>
    <scope>SUBCELLULAR LOCATION</scope>
    <scope>PROCESSING BY SORTASE A</scope>
    <source>
        <strain>RN4220</strain>
    </source>
</reference>
<name>ISDB_STAA8</name>
<dbReference type="EMBL" id="AY061874">
    <property type="protein sequence ID" value="AAL33769.1"/>
    <property type="molecule type" value="Genomic_DNA"/>
</dbReference>
<dbReference type="EMBL" id="CP000253">
    <property type="protein sequence ID" value="ABD30196.1"/>
    <property type="molecule type" value="Genomic_DNA"/>
</dbReference>
<dbReference type="RefSeq" id="WP_001041586.1">
    <property type="nucleotide sequence ID" value="NZ_LS483365.1"/>
</dbReference>
<dbReference type="RefSeq" id="YP_499626.1">
    <property type="nucleotide sequence ID" value="NC_007795.1"/>
</dbReference>
<dbReference type="PDB" id="5D1Q">
    <property type="method" value="X-ray"/>
    <property type="resolution" value="3.22 A"/>
    <property type="chains" value="E=325-442"/>
</dbReference>
<dbReference type="PDB" id="5D1X">
    <property type="method" value="X-ray"/>
    <property type="resolution" value="3.21 A"/>
    <property type="chains" value="E=341-458"/>
</dbReference>
<dbReference type="PDB" id="5D1Z">
    <property type="method" value="X-ray"/>
    <property type="resolution" value="3.17 A"/>
    <property type="chains" value="I/J=115-269"/>
</dbReference>
<dbReference type="PDB" id="6P9H">
    <property type="method" value="X-ray"/>
    <property type="resolution" value="3.00 A"/>
    <property type="chains" value="A/B=341-457"/>
</dbReference>
<dbReference type="PDB" id="7XLI">
    <property type="method" value="X-ray"/>
    <property type="resolution" value="1.70 A"/>
    <property type="chains" value="A=274-453"/>
</dbReference>
<dbReference type="PDBsum" id="5D1Q"/>
<dbReference type="PDBsum" id="5D1X"/>
<dbReference type="PDBsum" id="5D1Z"/>
<dbReference type="PDBsum" id="6P9H"/>
<dbReference type="PDBsum" id="7XLI"/>
<dbReference type="SMR" id="Q2FZF0"/>
<dbReference type="STRING" id="93061.SAOUHSC_01079"/>
<dbReference type="PaxDb" id="1280-SAXN108_1124"/>
<dbReference type="ABCD" id="Q2FZF0">
    <property type="antibodies" value="3 sequenced antibodies"/>
</dbReference>
<dbReference type="GeneID" id="3919242"/>
<dbReference type="KEGG" id="sao:SAOUHSC_01079"/>
<dbReference type="PATRIC" id="fig|93061.5.peg.990"/>
<dbReference type="eggNOG" id="COG5180">
    <property type="taxonomic scope" value="Bacteria"/>
</dbReference>
<dbReference type="eggNOG" id="COG5386">
    <property type="taxonomic scope" value="Bacteria"/>
</dbReference>
<dbReference type="HOGENOM" id="CLU_016167_0_0_9"/>
<dbReference type="OrthoDB" id="2414269at2"/>
<dbReference type="PHI-base" id="PHI:4568"/>
<dbReference type="PRO" id="PR:Q2FZF0"/>
<dbReference type="Proteomes" id="UP000008816">
    <property type="component" value="Chromosome"/>
</dbReference>
<dbReference type="GO" id="GO:0005576">
    <property type="term" value="C:extracellular region"/>
    <property type="evidence" value="ECO:0007669"/>
    <property type="project" value="UniProtKB-KW"/>
</dbReference>
<dbReference type="GO" id="GO:0015232">
    <property type="term" value="F:heme transmembrane transporter activity"/>
    <property type="evidence" value="ECO:0007669"/>
    <property type="project" value="InterPro"/>
</dbReference>
<dbReference type="GO" id="GO:0046872">
    <property type="term" value="F:metal ion binding"/>
    <property type="evidence" value="ECO:0007669"/>
    <property type="project" value="UniProtKB-KW"/>
</dbReference>
<dbReference type="CDD" id="cd06920">
    <property type="entry name" value="NEAT"/>
    <property type="match status" value="1"/>
</dbReference>
<dbReference type="Gene3D" id="1.20.58.1270">
    <property type="match status" value="1"/>
</dbReference>
<dbReference type="Gene3D" id="2.60.40.1850">
    <property type="match status" value="2"/>
</dbReference>
<dbReference type="InterPro" id="IPR019929">
    <property type="entry name" value="Iron-reg_IsdB"/>
</dbReference>
<dbReference type="InterPro" id="IPR048652">
    <property type="entry name" value="Isd_H_B_linker"/>
</dbReference>
<dbReference type="InterPro" id="IPR050436">
    <property type="entry name" value="IsdA"/>
</dbReference>
<dbReference type="InterPro" id="IPR019931">
    <property type="entry name" value="LPXTG_anchor"/>
</dbReference>
<dbReference type="InterPro" id="IPR006635">
    <property type="entry name" value="NEAT_dom"/>
</dbReference>
<dbReference type="InterPro" id="IPR037250">
    <property type="entry name" value="NEAT_dom_sf"/>
</dbReference>
<dbReference type="InterPro" id="IPR005877">
    <property type="entry name" value="YSIRK_signal_dom"/>
</dbReference>
<dbReference type="NCBIfam" id="TIGR03657">
    <property type="entry name" value="IsdB"/>
    <property type="match status" value="1"/>
</dbReference>
<dbReference type="NCBIfam" id="TIGR01167">
    <property type="entry name" value="LPXTG_anchor"/>
    <property type="match status" value="1"/>
</dbReference>
<dbReference type="NCBIfam" id="TIGR01168">
    <property type="entry name" value="YSIRK_signal"/>
    <property type="match status" value="1"/>
</dbReference>
<dbReference type="PANTHER" id="PTHR37824">
    <property type="entry name" value="IRON-REGULATED SURFACE DETERMINANT PROTEIN C"/>
    <property type="match status" value="1"/>
</dbReference>
<dbReference type="PANTHER" id="PTHR37824:SF1">
    <property type="entry name" value="IRON-REGULATED SURFACE DETERMINANT PROTEIN C"/>
    <property type="match status" value="1"/>
</dbReference>
<dbReference type="Pfam" id="PF00746">
    <property type="entry name" value="Gram_pos_anchor"/>
    <property type="match status" value="1"/>
</dbReference>
<dbReference type="Pfam" id="PF20861">
    <property type="entry name" value="Isd_H_B_linker"/>
    <property type="match status" value="1"/>
</dbReference>
<dbReference type="Pfam" id="PF05031">
    <property type="entry name" value="NEAT"/>
    <property type="match status" value="2"/>
</dbReference>
<dbReference type="Pfam" id="PF04650">
    <property type="entry name" value="YSIRK_signal"/>
    <property type="match status" value="1"/>
</dbReference>
<dbReference type="SMART" id="SM00725">
    <property type="entry name" value="NEAT"/>
    <property type="match status" value="2"/>
</dbReference>
<dbReference type="SUPFAM" id="SSF158911">
    <property type="entry name" value="NEAT domain-like"/>
    <property type="match status" value="2"/>
</dbReference>
<dbReference type="PROSITE" id="PS50847">
    <property type="entry name" value="GRAM_POS_ANCHORING"/>
    <property type="match status" value="1"/>
</dbReference>
<dbReference type="PROSITE" id="PS50978">
    <property type="entry name" value="NEAT"/>
    <property type="match status" value="2"/>
</dbReference>
<comment type="function">
    <text evidence="1">Cell wall-anchored surface receptor that extracts heme from oxidized metHb to enable growth on hemoglobin as a sole iron source. Rapidly extracts heme from hemoglobin and transfers it to IsdA or IsdC, which then relays it to the membrane transporter/IsdEF for internalization. Also promotes resistance to hydrogen peroxide and killing by neutrophils.</text>
</comment>
<comment type="subunit">
    <text evidence="1">Interacts with host HBA; this interaction allows heme extraction as iron source. Interacts with IsdA.</text>
</comment>
<comment type="subcellular location">
    <subcellularLocation>
        <location evidence="1">Secreted</location>
        <location evidence="1">Cell wall</location>
        <topology evidence="1">Peptidoglycan-anchor</topology>
    </subcellularLocation>
    <text evidence="1">Anchored to the cell wall by sortase A.</text>
</comment>
<comment type="induction">
    <text>Repressed by fur in the presence of iron.</text>
</comment>
<comment type="similarity">
    <text evidence="7">Belongs to the IsdB family.</text>
</comment>
<gene>
    <name type="primary">isdB</name>
    <name type="synonym">frpB</name>
    <name type="synonym">sasJ</name>
    <name type="synonym">sirH</name>
    <name type="ordered locus">SAOUHSC_01079</name>
</gene>
<evidence type="ECO:0000250" key="1">
    <source>
        <dbReference type="UniProtKB" id="A6QG30"/>
    </source>
</evidence>
<evidence type="ECO:0000250" key="2">
    <source>
        <dbReference type="UniProtKB" id="Q7A656"/>
    </source>
</evidence>
<evidence type="ECO:0000255" key="3"/>
<evidence type="ECO:0000255" key="4">
    <source>
        <dbReference type="PROSITE-ProRule" id="PRU00337"/>
    </source>
</evidence>
<evidence type="ECO:0000255" key="5">
    <source>
        <dbReference type="PROSITE-ProRule" id="PRU00477"/>
    </source>
</evidence>
<evidence type="ECO:0000256" key="6">
    <source>
        <dbReference type="SAM" id="MobiDB-lite"/>
    </source>
</evidence>
<evidence type="ECO:0000305" key="7"/>
<evidence type="ECO:0000305" key="8">
    <source>
    </source>
</evidence>
<evidence type="ECO:0007829" key="9">
    <source>
        <dbReference type="PDB" id="6P9H"/>
    </source>
</evidence>
<organism>
    <name type="scientific">Staphylococcus aureus (strain NCTC 8325 / PS 47)</name>
    <dbReference type="NCBI Taxonomy" id="93061"/>
    <lineage>
        <taxon>Bacteria</taxon>
        <taxon>Bacillati</taxon>
        <taxon>Bacillota</taxon>
        <taxon>Bacilli</taxon>
        <taxon>Bacillales</taxon>
        <taxon>Staphylococcaceae</taxon>
        <taxon>Staphylococcus</taxon>
    </lineage>
</organism>
<feature type="signal peptide" evidence="3">
    <location>
        <begin position="1"/>
        <end position="40"/>
    </location>
</feature>
<feature type="chain" id="PRO_0000292579" description="Iron-regulated surface determinant protein B">
    <location>
        <begin position="41"/>
        <end position="613"/>
    </location>
</feature>
<feature type="propeptide" id="PRO_0000292580" description="Removed by sortase" evidence="5 8">
    <location>
        <begin position="614"/>
        <end position="645"/>
    </location>
</feature>
<feature type="domain" description="NEAT 1" evidence="4">
    <location>
        <begin position="144"/>
        <end position="269"/>
    </location>
</feature>
<feature type="domain" description="NEAT 2" evidence="4">
    <location>
        <begin position="341"/>
        <end position="458"/>
    </location>
</feature>
<feature type="region of interest" description="Disordered" evidence="6">
    <location>
        <begin position="38"/>
        <end position="113"/>
    </location>
</feature>
<feature type="region of interest" description="Disordered" evidence="6">
    <location>
        <begin position="458"/>
        <end position="619"/>
    </location>
</feature>
<feature type="short sequence motif" description="YSIRK-G/S signaling motif" evidence="7">
    <location>
        <begin position="12"/>
        <end position="23"/>
    </location>
</feature>
<feature type="short sequence motif" description="LPXTG sorting signal" evidence="5">
    <location>
        <begin position="610"/>
        <end position="614"/>
    </location>
</feature>
<feature type="compositionally biased region" description="Low complexity" evidence="6">
    <location>
        <begin position="38"/>
        <end position="53"/>
    </location>
</feature>
<feature type="compositionally biased region" description="Basic and acidic residues" evidence="6">
    <location>
        <begin position="84"/>
        <end position="113"/>
    </location>
</feature>
<feature type="compositionally biased region" description="Basic and acidic residues" evidence="6">
    <location>
        <begin position="458"/>
        <end position="476"/>
    </location>
</feature>
<feature type="compositionally biased region" description="Basic and acidic residues" evidence="6">
    <location>
        <begin position="489"/>
        <end position="534"/>
    </location>
</feature>
<feature type="compositionally biased region" description="Low complexity" evidence="6">
    <location>
        <begin position="535"/>
        <end position="560"/>
    </location>
</feature>
<feature type="compositionally biased region" description="Polar residues" evidence="6">
    <location>
        <begin position="585"/>
        <end position="615"/>
    </location>
</feature>
<feature type="binding site" description="axial binding residue" evidence="2">
    <location>
        <position position="362"/>
    </location>
    <ligand>
        <name>heme</name>
        <dbReference type="ChEBI" id="CHEBI:30413"/>
    </ligand>
    <ligandPart>
        <name>Fe</name>
        <dbReference type="ChEBI" id="CHEBI:18248"/>
    </ligandPart>
</feature>
<feature type="binding site" description="axial binding residue" evidence="2">
    <location>
        <position position="440"/>
    </location>
    <ligand>
        <name>heme</name>
        <dbReference type="ChEBI" id="CHEBI:30413"/>
    </ligand>
    <ligandPart>
        <name>Fe</name>
        <dbReference type="ChEBI" id="CHEBI:18248"/>
    </ligandPart>
</feature>
<feature type="modified residue" description="Pentaglycyl murein peptidoglycan amidated threonine" evidence="5">
    <location>
        <position position="613"/>
    </location>
</feature>
<feature type="sequence conflict" description="In Ref. 1; AAL33769." evidence="7" ref="1">
    <original>QA</original>
    <variation>K</variation>
    <location>
        <begin position="39"/>
        <end position="40"/>
    </location>
</feature>
<feature type="sequence conflict" description="In Ref. 1; AAL33769." evidence="7" ref="1">
    <original>G</original>
    <variation>V</variation>
    <location>
        <position position="47"/>
    </location>
</feature>
<feature type="sequence conflict" description="In Ref. 1; AAL33769." evidence="7" ref="1">
    <original>P</original>
    <variation>PT</variation>
    <location>
        <position position="62"/>
    </location>
</feature>
<feature type="sequence conflict" description="In Ref. 1; AAL33769." evidence="7" ref="1">
    <original>S</original>
    <variation>T</variation>
    <location>
        <position position="66"/>
    </location>
</feature>
<feature type="sequence conflict" description="In Ref. 1; AAL33769." evidence="7" ref="1">
    <original>T</original>
    <variation>AKPVA</variation>
    <location>
        <position position="72"/>
    </location>
</feature>
<feature type="sequence conflict" description="In Ref. 1; AAL33769." evidence="7" ref="1">
    <original>E</original>
    <variation>V</variation>
    <location>
        <position position="87"/>
    </location>
</feature>
<feature type="sequence conflict" description="In Ref. 1; AAL33769." evidence="7" ref="1">
    <original>S</original>
    <variation>T</variation>
    <location>
        <position position="91"/>
    </location>
</feature>
<feature type="sequence conflict" description="In Ref. 1; AAL33769." evidence="7" ref="1">
    <original>E</original>
    <variation>EVKA</variation>
    <location>
        <position position="98"/>
    </location>
</feature>
<feature type="sequence conflict" description="In Ref. 1; AAL33769." evidence="7" ref="1">
    <original>T</original>
    <variation>A</variation>
    <location>
        <position position="108"/>
    </location>
</feature>
<feature type="sequence conflict" description="In Ref. 1; AAL33769." evidence="7" ref="1">
    <original>V</original>
    <variation>E</variation>
    <location>
        <position position="111"/>
    </location>
</feature>
<feature type="sequence conflict" description="In Ref. 1; AAL33769." evidence="7" ref="1">
    <original>T</original>
    <variation>D</variation>
    <location>
        <position position="118"/>
    </location>
</feature>
<feature type="sequence conflict" description="In Ref. 1; AAL33769." evidence="7" ref="1">
    <original>D</original>
    <variation>E</variation>
    <location>
        <position position="316"/>
    </location>
</feature>
<feature type="sequence conflict" description="In Ref. 1; AAL33769." evidence="7" ref="1">
    <original>T</original>
    <variation>A</variation>
    <location>
        <position position="365"/>
    </location>
</feature>
<feature type="sequence conflict" description="In Ref. 1; AAL33769." evidence="7" ref="1">
    <original>T</original>
    <variation>A</variation>
    <location>
        <position position="459"/>
    </location>
</feature>
<feature type="sequence conflict" description="In Ref. 1; AAL33769." evidence="7" ref="1">
    <original>S</original>
    <variation>T</variation>
    <location>
        <position position="462"/>
    </location>
</feature>
<feature type="sequence conflict" description="In Ref. 1; AAL33769." evidence="7" ref="1">
    <original>A</original>
    <variation>T</variation>
    <location>
        <position position="476"/>
    </location>
</feature>
<feature type="sequence conflict" description="In Ref. 1; AAL33769." evidence="7" ref="1">
    <original>T</original>
    <variation>M</variation>
    <location>
        <position position="480"/>
    </location>
</feature>
<feature type="sequence conflict" description="In Ref. 1; AAL33769." evidence="7" ref="1">
    <original>PS</original>
    <variation>TP</variation>
    <location>
        <begin position="486"/>
        <end position="487"/>
    </location>
</feature>
<feature type="sequence conflict" description="In Ref. 1; AAL33769." evidence="7" ref="1">
    <original>L</original>
    <variation>S</variation>
    <location>
        <position position="506"/>
    </location>
</feature>
<feature type="sequence conflict" description="In Ref. 1; AAL33769." evidence="7" ref="1">
    <original>TPA</original>
    <variation>MPV</variation>
    <location>
        <begin position="524"/>
        <end position="526"/>
    </location>
</feature>
<feature type="sequence conflict" description="In Ref. 1; AAL33769." evidence="7" ref="1">
    <original>TKG</original>
    <variation>AKA</variation>
    <location>
        <begin position="530"/>
        <end position="532"/>
    </location>
</feature>
<feature type="sequence conflict" description="In Ref. 1; AAL33769." evidence="7" ref="1">
    <original>K</original>
    <variation>E</variation>
    <location>
        <position position="560"/>
    </location>
</feature>
<feature type="sequence conflict" description="In Ref. 1; AAL33769." evidence="7" ref="1">
    <original>L</original>
    <variation>I</variation>
    <location>
        <position position="629"/>
    </location>
</feature>
<feature type="strand" evidence="9">
    <location>
        <begin position="343"/>
        <end position="347"/>
    </location>
</feature>
<feature type="strand" evidence="9">
    <location>
        <begin position="350"/>
        <end position="360"/>
    </location>
</feature>
<feature type="helix" evidence="9">
    <location>
        <begin position="362"/>
        <end position="366"/>
    </location>
</feature>
<feature type="strand" evidence="9">
    <location>
        <begin position="367"/>
        <end position="376"/>
    </location>
</feature>
<feature type="strand" evidence="9">
    <location>
        <begin position="379"/>
        <end position="387"/>
    </location>
</feature>
<feature type="helix" evidence="9">
    <location>
        <begin position="389"/>
        <end position="391"/>
    </location>
</feature>
<feature type="strand" evidence="9">
    <location>
        <begin position="392"/>
        <end position="397"/>
    </location>
</feature>
<feature type="strand" evidence="9">
    <location>
        <begin position="403"/>
        <end position="408"/>
    </location>
</feature>
<feature type="turn" evidence="9">
    <location>
        <begin position="409"/>
        <end position="412"/>
    </location>
</feature>
<feature type="strand" evidence="9">
    <location>
        <begin position="413"/>
        <end position="419"/>
    </location>
</feature>
<feature type="strand" evidence="9">
    <location>
        <begin position="426"/>
        <end position="435"/>
    </location>
</feature>
<feature type="helix" evidence="9">
    <location>
        <begin position="436"/>
        <end position="438"/>
    </location>
</feature>
<feature type="strand" evidence="9">
    <location>
        <begin position="440"/>
        <end position="451"/>
    </location>
</feature>
<sequence length="645" mass="72192">MNKQQKEFKSFYSIRKSSLGVASVAISTLLLLMSNGEAQAAAEETGGTNTEAQPKTEAVASPTTTSEKAPETKPVANAVSVSNKEVEAPTSETKEAKEVKEVKAPKETKEVKPAAKATNNTYPILNQELREAIKNPAIKDKDHSAPNSRPIDFEMKKKDGTQQFYHYASSVKPARVIFTDSKPEIELGLQSGQFWRKFEVYEGDKKLPIKLVSYDTVKDYAYIRFSVSNGTKAVKIVSSTHFNNKEEKYDYTLMEFAQPIYNSADKFKTEEDYKAEKLLAPYKKAKTLERQVYELNKIQDKLPEKLKAEYKKKLEDTKKALDEQVKSAITEFQNVQPTNEKMTDLQDTKYVVYESVENNESMMDTFVKHPIKTGMLNGKKYMVMETTNDDYWKDFMVEGQRVRTISKDAKNNTRTIIFPYVEGKTLYDAIVKVHVKTIDYDGQYHVRIVDKEAFTKANTDKSNKKEQQDNSAKKEATPATPSKPTPSPVEKESQKQDSQKDDNKQLPSVEKENDASSESGKDKTPATKPTKGEVESSSTTPTKVVSTTQNVAKPTTASSKTTKDVVQTSAGSSEAKDSAPLQKANIKNTNDGHTQSQNNKNTQENKAKSLPQTGEESNKDMTLPLMALLALSSIVAFVLPRKRKN</sequence>
<protein>
    <recommendedName>
        <fullName>Iron-regulated surface determinant protein B</fullName>
    </recommendedName>
    <alternativeName>
        <fullName>Fur-regulated protein B</fullName>
    </alternativeName>
    <alternativeName>
        <fullName>Staphylococcal iron-regulated protein H</fullName>
    </alternativeName>
    <alternativeName>
        <fullName>Staphylococcus aureus surface protein J</fullName>
    </alternativeName>
</protein>
<keyword id="KW-0002">3D-structure</keyword>
<keyword id="KW-0134">Cell wall</keyword>
<keyword id="KW-0349">Heme</keyword>
<keyword id="KW-0408">Iron</keyword>
<keyword id="KW-0479">Metal-binding</keyword>
<keyword id="KW-0572">Peptidoglycan-anchor</keyword>
<keyword id="KW-1185">Reference proteome</keyword>
<keyword id="KW-0677">Repeat</keyword>
<keyword id="KW-0964">Secreted</keyword>
<keyword id="KW-0732">Signal</keyword>
<keyword id="KW-0843">Virulence</keyword>